<sequence>MSSSIPRVYSLGNSAMTYLLALRIAQLPSQPKVPSVVLLLNDQKKLNRFLNNDSKIIVKSSNNNKETYHRQFMASCVPPILSNGEIAPIENLIVSDPSSKFITAQLSKYNKSLRPETNILFLNPSLNLLEHLHRYRWRFDEARPNLFMGFTTPVDVGTIHQEFQLSLKVKGRIQFHIAKIDGFPRMSSTGKSASLSLRGDRQKNEKENNAFYKLFREISRLRSGIGSDLVSFDLHVHGFQDLFFTELEKLILESCTEPLLAVYDCVYKKELLKIPGAQDIIKKLISEQLSIIDRSYPSLNTNPNYSVIFDKERIFSLVMRDLEVNGHKRAKLAQSLNQLNQTNINELNGFFVSLGKYKKCNCKWNDILLTLIKGKQFITKQKALDYHYL</sequence>
<accession>P14905</accession>
<accession>D6VSI0</accession>
<evidence type="ECO:0000269" key="1">
    <source>
    </source>
</evidence>
<evidence type="ECO:0000269" key="2">
    <source>
    </source>
</evidence>
<evidence type="ECO:0000269" key="3">
    <source>
    </source>
</evidence>
<reference key="1">
    <citation type="journal article" date="1988" name="Mol. Gen. Genet.">
        <title>Yeast nuclear gene CBS2, required for translational activation of cytochrome b, encodes a basic protein of 45 kDa.</title>
        <authorList>
            <person name="Michaelis U."/>
            <person name="Schlapp T."/>
            <person name="Roedel G."/>
        </authorList>
    </citation>
    <scope>NUCLEOTIDE SEQUENCE [GENOMIC DNA]</scope>
    <scope>FUNCTION</scope>
</reference>
<reference key="2">
    <citation type="journal article" date="1997" name="Nature">
        <title>The nucleotide sequence of Saccharomyces cerevisiae chromosome IV.</title>
        <authorList>
            <person name="Jacq C."/>
            <person name="Alt-Moerbe J."/>
            <person name="Andre B."/>
            <person name="Arnold W."/>
            <person name="Bahr A."/>
            <person name="Ballesta J.P.G."/>
            <person name="Bargues M."/>
            <person name="Baron L."/>
            <person name="Becker A."/>
            <person name="Biteau N."/>
            <person name="Bloecker H."/>
            <person name="Blugeon C."/>
            <person name="Boskovic J."/>
            <person name="Brandt P."/>
            <person name="Brueckner M."/>
            <person name="Buitrago M.J."/>
            <person name="Coster F."/>
            <person name="Delaveau T."/>
            <person name="del Rey F."/>
            <person name="Dujon B."/>
            <person name="Eide L.G."/>
            <person name="Garcia-Cantalejo J.M."/>
            <person name="Goffeau A."/>
            <person name="Gomez-Peris A."/>
            <person name="Granotier C."/>
            <person name="Hanemann V."/>
            <person name="Hankeln T."/>
            <person name="Hoheisel J.D."/>
            <person name="Jaeger W."/>
            <person name="Jimenez A."/>
            <person name="Jonniaux J.-L."/>
            <person name="Kraemer C."/>
            <person name="Kuester H."/>
            <person name="Laamanen P."/>
            <person name="Legros Y."/>
            <person name="Louis E.J."/>
            <person name="Moeller-Rieker S."/>
            <person name="Monnet A."/>
            <person name="Moro M."/>
            <person name="Mueller-Auer S."/>
            <person name="Nussbaumer B."/>
            <person name="Paricio N."/>
            <person name="Paulin L."/>
            <person name="Perea J."/>
            <person name="Perez-Alonso M."/>
            <person name="Perez-Ortin J.E."/>
            <person name="Pohl T.M."/>
            <person name="Prydz H."/>
            <person name="Purnelle B."/>
            <person name="Rasmussen S.W."/>
            <person name="Remacha M.A."/>
            <person name="Revuelta J.L."/>
            <person name="Rieger M."/>
            <person name="Salom D."/>
            <person name="Saluz H.P."/>
            <person name="Saiz J.E."/>
            <person name="Saren A.-M."/>
            <person name="Schaefer M."/>
            <person name="Scharfe M."/>
            <person name="Schmidt E.R."/>
            <person name="Schneider C."/>
            <person name="Scholler P."/>
            <person name="Schwarz S."/>
            <person name="Soler-Mira A."/>
            <person name="Urrestarazu L.A."/>
            <person name="Verhasselt P."/>
            <person name="Vissers S."/>
            <person name="Voet M."/>
            <person name="Volckaert G."/>
            <person name="Wagner G."/>
            <person name="Wambutt R."/>
            <person name="Wedler E."/>
            <person name="Wedler H."/>
            <person name="Woelfl S."/>
            <person name="Harris D.E."/>
            <person name="Bowman S."/>
            <person name="Brown D."/>
            <person name="Churcher C.M."/>
            <person name="Connor R."/>
            <person name="Dedman K."/>
            <person name="Gentles S."/>
            <person name="Hamlin N."/>
            <person name="Hunt S."/>
            <person name="Jones L."/>
            <person name="McDonald S."/>
            <person name="Murphy L.D."/>
            <person name="Niblett D."/>
            <person name="Odell C."/>
            <person name="Oliver K."/>
            <person name="Rajandream M.A."/>
            <person name="Richards C."/>
            <person name="Shore L."/>
            <person name="Walsh S.V."/>
            <person name="Barrell B.G."/>
            <person name="Dietrich F.S."/>
            <person name="Mulligan J.T."/>
            <person name="Allen E."/>
            <person name="Araujo R."/>
            <person name="Aviles E."/>
            <person name="Berno A."/>
            <person name="Carpenter J."/>
            <person name="Chen E."/>
            <person name="Cherry J.M."/>
            <person name="Chung E."/>
            <person name="Duncan M."/>
            <person name="Hunicke-Smith S."/>
            <person name="Hyman R.W."/>
            <person name="Komp C."/>
            <person name="Lashkari D."/>
            <person name="Lew H."/>
            <person name="Lin D."/>
            <person name="Mosedale D."/>
            <person name="Nakahara K."/>
            <person name="Namath A."/>
            <person name="Oefner P."/>
            <person name="Oh C."/>
            <person name="Petel F.X."/>
            <person name="Roberts D."/>
            <person name="Schramm S."/>
            <person name="Schroeder M."/>
            <person name="Shogren T."/>
            <person name="Shroff N."/>
            <person name="Winant A."/>
            <person name="Yelton M.A."/>
            <person name="Botstein D."/>
            <person name="Davis R.W."/>
            <person name="Johnston M."/>
            <person name="Andrews S."/>
            <person name="Brinkman R."/>
            <person name="Cooper J."/>
            <person name="Ding H."/>
            <person name="Du Z."/>
            <person name="Favello A."/>
            <person name="Fulton L."/>
            <person name="Gattung S."/>
            <person name="Greco T."/>
            <person name="Hallsworth K."/>
            <person name="Hawkins J."/>
            <person name="Hillier L.W."/>
            <person name="Jier M."/>
            <person name="Johnson D."/>
            <person name="Johnston L."/>
            <person name="Kirsten J."/>
            <person name="Kucaba T."/>
            <person name="Langston Y."/>
            <person name="Latreille P."/>
            <person name="Le T."/>
            <person name="Mardis E."/>
            <person name="Menezes S."/>
            <person name="Miller N."/>
            <person name="Nhan M."/>
            <person name="Pauley A."/>
            <person name="Peluso D."/>
            <person name="Rifkin L."/>
            <person name="Riles L."/>
            <person name="Taich A."/>
            <person name="Trevaskis E."/>
            <person name="Vignati D."/>
            <person name="Wilcox L."/>
            <person name="Wohldman P."/>
            <person name="Vaudin M."/>
            <person name="Wilson R."/>
            <person name="Waterston R."/>
            <person name="Albermann K."/>
            <person name="Hani J."/>
            <person name="Heumann K."/>
            <person name="Kleine K."/>
            <person name="Mewes H.-W."/>
            <person name="Zollner A."/>
            <person name="Zaccaria P."/>
        </authorList>
    </citation>
    <scope>NUCLEOTIDE SEQUENCE [LARGE SCALE GENOMIC DNA]</scope>
    <source>
        <strain>ATCC 204508 / S288c</strain>
    </source>
</reference>
<reference key="3">
    <citation type="journal article" date="2014" name="G3 (Bethesda)">
        <title>The reference genome sequence of Saccharomyces cerevisiae: Then and now.</title>
        <authorList>
            <person name="Engel S.R."/>
            <person name="Dietrich F.S."/>
            <person name="Fisk D.G."/>
            <person name="Binkley G."/>
            <person name="Balakrishnan R."/>
            <person name="Costanzo M.C."/>
            <person name="Dwight S.S."/>
            <person name="Hitz B.C."/>
            <person name="Karra K."/>
            <person name="Nash R.S."/>
            <person name="Weng S."/>
            <person name="Wong E.D."/>
            <person name="Lloyd P."/>
            <person name="Skrzypek M.S."/>
            <person name="Miyasato S.R."/>
            <person name="Simison M."/>
            <person name="Cherry J.M."/>
        </authorList>
    </citation>
    <scope>GENOME REANNOTATION</scope>
    <source>
        <strain>ATCC 204508 / S288c</strain>
    </source>
</reference>
<reference key="4">
    <citation type="journal article" date="2007" name="Genome Res.">
        <title>Approaching a complete repository of sequence-verified protein-encoding clones for Saccharomyces cerevisiae.</title>
        <authorList>
            <person name="Hu Y."/>
            <person name="Rolfs A."/>
            <person name="Bhullar B."/>
            <person name="Murthy T.V.S."/>
            <person name="Zhu C."/>
            <person name="Berger M.F."/>
            <person name="Camargo A.A."/>
            <person name="Kelley F."/>
            <person name="McCarron S."/>
            <person name="Jepson D."/>
            <person name="Richardson A."/>
            <person name="Raphael J."/>
            <person name="Moreira D."/>
            <person name="Taycher E."/>
            <person name="Zuo D."/>
            <person name="Mohr S."/>
            <person name="Kane M.F."/>
            <person name="Williamson J."/>
            <person name="Simpson A.J.G."/>
            <person name="Bulyk M.L."/>
            <person name="Harlow E."/>
            <person name="Marsischky G."/>
            <person name="Kolodner R.D."/>
            <person name="LaBaer J."/>
        </authorList>
    </citation>
    <scope>NUCLEOTIDE SEQUENCE [GENOMIC DNA]</scope>
    <source>
        <strain>ATCC 204508 / S288c</strain>
    </source>
</reference>
<reference key="5">
    <citation type="journal article" date="1990" name="Mol. Gen. Genet.">
        <title>Identification of CBS2 as a mitochondrial protein in Saccharomyces cerevisiae.</title>
        <authorList>
            <person name="Michaelis U."/>
            <person name="Roedel G."/>
        </authorList>
    </citation>
    <scope>SUBCELLULAR LOCATION</scope>
    <scope>LACK OF PROCESSING</scope>
</reference>
<reference key="6">
    <citation type="journal article" date="2003" name="Nature">
        <title>Global analysis of protein expression in yeast.</title>
        <authorList>
            <person name="Ghaemmaghami S."/>
            <person name="Huh W.-K."/>
            <person name="Bower K."/>
            <person name="Howson R.W."/>
            <person name="Belle A."/>
            <person name="Dephoure N."/>
            <person name="O'Shea E.K."/>
            <person name="Weissman J.S."/>
        </authorList>
    </citation>
    <scope>LEVEL OF PROTEIN EXPRESSION [LARGE SCALE ANALYSIS]</scope>
</reference>
<name>CBP7_YEAST</name>
<gene>
    <name type="primary">CBS2</name>
    <name type="synonym">CBP7</name>
    <name type="ordered locus">YDR197W</name>
    <name type="ORF">YD9346.08</name>
</gene>
<feature type="chain" id="PRO_0000089382" description="Cytochrome B translational activator CBS2">
    <location>
        <begin position="1"/>
        <end position="389"/>
    </location>
</feature>
<dbReference type="EMBL" id="X13523">
    <property type="protein sequence ID" value="CAA31876.1"/>
    <property type="molecule type" value="Genomic_DNA"/>
</dbReference>
<dbReference type="EMBL" id="Z48784">
    <property type="protein sequence ID" value="CAA88710.1"/>
    <property type="molecule type" value="Genomic_DNA"/>
</dbReference>
<dbReference type="EMBL" id="AY558577">
    <property type="protein sequence ID" value="AAS56903.1"/>
    <property type="molecule type" value="Genomic_DNA"/>
</dbReference>
<dbReference type="EMBL" id="BK006938">
    <property type="protein sequence ID" value="DAA12040.1"/>
    <property type="molecule type" value="Genomic_DNA"/>
</dbReference>
<dbReference type="PIR" id="S22839">
    <property type="entry name" value="S22839"/>
</dbReference>
<dbReference type="RefSeq" id="NP_010483.1">
    <property type="nucleotide sequence ID" value="NM_001180505.1"/>
</dbReference>
<dbReference type="SMR" id="P14905"/>
<dbReference type="BioGRID" id="32249">
    <property type="interactions" value="159"/>
</dbReference>
<dbReference type="FunCoup" id="P14905">
    <property type="interactions" value="43"/>
</dbReference>
<dbReference type="IntAct" id="P14905">
    <property type="interactions" value="9"/>
</dbReference>
<dbReference type="STRING" id="4932.YDR197W"/>
<dbReference type="CarbonylDB" id="P14905"/>
<dbReference type="PaxDb" id="4932-YDR197W"/>
<dbReference type="PeptideAtlas" id="P14905"/>
<dbReference type="EnsemblFungi" id="YDR197W_mRNA">
    <property type="protein sequence ID" value="YDR197W"/>
    <property type="gene ID" value="YDR197W"/>
</dbReference>
<dbReference type="GeneID" id="851778"/>
<dbReference type="KEGG" id="sce:YDR197W"/>
<dbReference type="AGR" id="SGD:S000002605"/>
<dbReference type="SGD" id="S000002605">
    <property type="gene designation" value="CBS2"/>
</dbReference>
<dbReference type="VEuPathDB" id="FungiDB:YDR197W"/>
<dbReference type="eggNOG" id="ENOG502RI8G">
    <property type="taxonomic scope" value="Eukaryota"/>
</dbReference>
<dbReference type="HOGENOM" id="CLU_031468_10_2_1"/>
<dbReference type="InParanoid" id="P14905"/>
<dbReference type="OMA" id="NCKWNDI"/>
<dbReference type="OrthoDB" id="73846at2759"/>
<dbReference type="BioCyc" id="YEAST:G3O-29783-MONOMER"/>
<dbReference type="BioGRID-ORCS" id="851778">
    <property type="hits" value="2 hits in 10 CRISPR screens"/>
</dbReference>
<dbReference type="PRO" id="PR:P14905"/>
<dbReference type="Proteomes" id="UP000002311">
    <property type="component" value="Chromosome IV"/>
</dbReference>
<dbReference type="RNAct" id="P14905">
    <property type="molecule type" value="protein"/>
</dbReference>
<dbReference type="GO" id="GO:0005737">
    <property type="term" value="C:cytoplasm"/>
    <property type="evidence" value="ECO:0000318"/>
    <property type="project" value="GO_Central"/>
</dbReference>
<dbReference type="GO" id="GO:0005761">
    <property type="term" value="C:mitochondrial ribosome"/>
    <property type="evidence" value="ECO:0000353"/>
    <property type="project" value="SGD"/>
</dbReference>
<dbReference type="GO" id="GO:0005739">
    <property type="term" value="C:mitochondrion"/>
    <property type="evidence" value="ECO:0000314"/>
    <property type="project" value="GO_Central"/>
</dbReference>
<dbReference type="GO" id="GO:0008677">
    <property type="term" value="F:2-dehydropantoate 2-reductase activity"/>
    <property type="evidence" value="ECO:0000318"/>
    <property type="project" value="GO_Central"/>
</dbReference>
<dbReference type="GO" id="GO:0050661">
    <property type="term" value="F:NADP binding"/>
    <property type="evidence" value="ECO:0000318"/>
    <property type="project" value="GO_Central"/>
</dbReference>
<dbReference type="GO" id="GO:0045182">
    <property type="term" value="F:translation regulator activity"/>
    <property type="evidence" value="ECO:0000315"/>
    <property type="project" value="SGD"/>
</dbReference>
<dbReference type="GO" id="GO:0070131">
    <property type="term" value="P:positive regulation of mitochondrial translation"/>
    <property type="evidence" value="ECO:0000315"/>
    <property type="project" value="SGD"/>
</dbReference>
<dbReference type="Gene3D" id="1.10.1040.10">
    <property type="entry name" value="N-(1-d-carboxylethyl)-l-norvaline Dehydrogenase, domain 2"/>
    <property type="match status" value="1"/>
</dbReference>
<dbReference type="InterPro" id="IPR008927">
    <property type="entry name" value="6-PGluconate_DH-like_C_sf"/>
</dbReference>
<dbReference type="InterPro" id="IPR013328">
    <property type="entry name" value="6PGD_dom2"/>
</dbReference>
<dbReference type="InterPro" id="IPR050838">
    <property type="entry name" value="Ketopantoate_reductase"/>
</dbReference>
<dbReference type="InterPro" id="IPR013752">
    <property type="entry name" value="KPA_reductase"/>
</dbReference>
<dbReference type="PANTHER" id="PTHR43765">
    <property type="entry name" value="2-DEHYDROPANTOATE 2-REDUCTASE-RELATED"/>
    <property type="match status" value="1"/>
</dbReference>
<dbReference type="PANTHER" id="PTHR43765:SF4">
    <property type="entry name" value="CYTOCHROME B TRANSLATIONAL ACTIVATOR PROTEIN CBS2"/>
    <property type="match status" value="1"/>
</dbReference>
<dbReference type="Pfam" id="PF08546">
    <property type="entry name" value="ApbA_C"/>
    <property type="match status" value="1"/>
</dbReference>
<dbReference type="SUPFAM" id="SSF48179">
    <property type="entry name" value="6-phosphogluconate dehydrogenase C-terminal domain-like"/>
    <property type="match status" value="1"/>
</dbReference>
<protein>
    <recommendedName>
        <fullName>Cytochrome B translational activator CBS2</fullName>
    </recommendedName>
</protein>
<organism>
    <name type="scientific">Saccharomyces cerevisiae (strain ATCC 204508 / S288c)</name>
    <name type="common">Baker's yeast</name>
    <dbReference type="NCBI Taxonomy" id="559292"/>
    <lineage>
        <taxon>Eukaryota</taxon>
        <taxon>Fungi</taxon>
        <taxon>Dikarya</taxon>
        <taxon>Ascomycota</taxon>
        <taxon>Saccharomycotina</taxon>
        <taxon>Saccharomycetes</taxon>
        <taxon>Saccharomycetales</taxon>
        <taxon>Saccharomycetaceae</taxon>
        <taxon>Saccharomyces</taxon>
    </lineage>
</organism>
<proteinExistence type="evidence at protein level"/>
<keyword id="KW-0010">Activator</keyword>
<keyword id="KW-0496">Mitochondrion</keyword>
<keyword id="KW-1185">Reference proteome</keyword>
<keyword id="KW-0810">Translation regulation</keyword>
<comment type="function">
    <text evidence="3">Translational activator of cytochrome b. The cytochrome b (coB) leader RNA may represent the target sequence for CBS1 and/ or CBS2.</text>
</comment>
<comment type="subcellular location">
    <subcellularLocation>
        <location evidence="2">Mitochondrion</location>
    </subcellularLocation>
</comment>
<comment type="miscellaneous">
    <text evidence="1">Present with 2140 molecules/cell in log phase SD medium.</text>
</comment>